<name>SYM_LEGPA</name>
<feature type="chain" id="PRO_0000139137" description="Methionine--tRNA ligase">
    <location>
        <begin position="1"/>
        <end position="670"/>
    </location>
</feature>
<feature type="domain" description="tRNA-binding" evidence="1">
    <location>
        <begin position="570"/>
        <end position="670"/>
    </location>
</feature>
<feature type="short sequence motif" description="'HIGH' region">
    <location>
        <begin position="14"/>
        <end position="24"/>
    </location>
</feature>
<feature type="short sequence motif" description="'KMSKS' region">
    <location>
        <begin position="330"/>
        <end position="334"/>
    </location>
</feature>
<feature type="binding site" evidence="1">
    <location>
        <position position="145"/>
    </location>
    <ligand>
        <name>Zn(2+)</name>
        <dbReference type="ChEBI" id="CHEBI:29105"/>
    </ligand>
</feature>
<feature type="binding site" evidence="1">
    <location>
        <position position="148"/>
    </location>
    <ligand>
        <name>Zn(2+)</name>
        <dbReference type="ChEBI" id="CHEBI:29105"/>
    </ligand>
</feature>
<feature type="binding site" evidence="1">
    <location>
        <position position="158"/>
    </location>
    <ligand>
        <name>Zn(2+)</name>
        <dbReference type="ChEBI" id="CHEBI:29105"/>
    </ligand>
</feature>
<feature type="binding site" evidence="1">
    <location>
        <position position="161"/>
    </location>
    <ligand>
        <name>Zn(2+)</name>
        <dbReference type="ChEBI" id="CHEBI:29105"/>
    </ligand>
</feature>
<feature type="binding site" evidence="1">
    <location>
        <position position="333"/>
    </location>
    <ligand>
        <name>ATP</name>
        <dbReference type="ChEBI" id="CHEBI:30616"/>
    </ligand>
</feature>
<protein>
    <recommendedName>
        <fullName evidence="1">Methionine--tRNA ligase</fullName>
        <ecNumber evidence="1">6.1.1.10</ecNumber>
    </recommendedName>
    <alternativeName>
        <fullName evidence="1">Methionyl-tRNA synthetase</fullName>
        <shortName evidence="1">MetRS</shortName>
    </alternativeName>
</protein>
<sequence>MTSERKMLVTSALPYANGHLHLGHLVEHIQTDIWVRTHKMLGIQCISVCGDDAHGTPIMLKAEQLGITPEALTAEIKLSHEKDFKAFAIDYDYYHTTHSPENQVLATTIFERLQAGGDIVKKTIRQFYDPVKQMFLPDRYVKGTCPKCAAVDQYGDNCEVCGATYSPTDLINPVSVISGASPVEKESEHYFFDLPLYEELLKDWTRKGHLQAEVTNKLSEWFEAGLKQWDISRDAPYFGFPIPGVPDKYFYVWLDAPIGYMASFKKYCDERGVSFDEFWDKASKTELYHFVGKDIVYFHALFWPAMLAASGFRTPTAVYTHGFLTVEGQKMSKSRGTFIEARAYLAHLHPEYLRYYFAAKLNGRVDDLDLNFDDFVNRVNADLVGKVVNIASRCAGFINKRFDNRLSSELNDPKLHNDLLSARESVIDAFVSRDYARAIRQIMDCADKVNQYIDANKPWVLAKDESKLNEVHAICTMGINLFRILITYLKPVLPMMAKASEEFLNSEPLHWGSIDKPLLNHRINTFKPLMVRVEKEKIEAMLVQSKESLMTTPVKENTPVEDANLISIEDFAKVDLRIAKIVNAEPVEGADKLMRLILDLGDAQKQVFAGIKKAYDAEELIGRLTVMVANLEPRTMRFGVSEGMVLAAGDGQGIYLLQPDAGALPGMKVK</sequence>
<accession>Q5X105</accession>
<keyword id="KW-0030">Aminoacyl-tRNA synthetase</keyword>
<keyword id="KW-0067">ATP-binding</keyword>
<keyword id="KW-0963">Cytoplasm</keyword>
<keyword id="KW-0436">Ligase</keyword>
<keyword id="KW-0479">Metal-binding</keyword>
<keyword id="KW-0547">Nucleotide-binding</keyword>
<keyword id="KW-0648">Protein biosynthesis</keyword>
<keyword id="KW-0694">RNA-binding</keyword>
<keyword id="KW-0820">tRNA-binding</keyword>
<keyword id="KW-0862">Zinc</keyword>
<comment type="function">
    <text evidence="1">Is required not only for elongation of protein synthesis but also for the initiation of all mRNA translation through initiator tRNA(fMet) aminoacylation.</text>
</comment>
<comment type="catalytic activity">
    <reaction evidence="1">
        <text>tRNA(Met) + L-methionine + ATP = L-methionyl-tRNA(Met) + AMP + diphosphate</text>
        <dbReference type="Rhea" id="RHEA:13481"/>
        <dbReference type="Rhea" id="RHEA-COMP:9667"/>
        <dbReference type="Rhea" id="RHEA-COMP:9698"/>
        <dbReference type="ChEBI" id="CHEBI:30616"/>
        <dbReference type="ChEBI" id="CHEBI:33019"/>
        <dbReference type="ChEBI" id="CHEBI:57844"/>
        <dbReference type="ChEBI" id="CHEBI:78442"/>
        <dbReference type="ChEBI" id="CHEBI:78530"/>
        <dbReference type="ChEBI" id="CHEBI:456215"/>
        <dbReference type="EC" id="6.1.1.10"/>
    </reaction>
</comment>
<comment type="cofactor">
    <cofactor evidence="1">
        <name>Zn(2+)</name>
        <dbReference type="ChEBI" id="CHEBI:29105"/>
    </cofactor>
    <text evidence="1">Binds 1 zinc ion per subunit.</text>
</comment>
<comment type="subunit">
    <text evidence="1">Homodimer.</text>
</comment>
<comment type="subcellular location">
    <subcellularLocation>
        <location evidence="1">Cytoplasm</location>
    </subcellularLocation>
</comment>
<comment type="similarity">
    <text evidence="1">Belongs to the class-I aminoacyl-tRNA synthetase family. MetG type 1 subfamily.</text>
</comment>
<gene>
    <name evidence="1" type="primary">metG</name>
    <name type="ordered locus">lpp2941</name>
</gene>
<reference key="1">
    <citation type="journal article" date="2004" name="Nat. Genet.">
        <title>Evidence in the Legionella pneumophila genome for exploitation of host cell functions and high genome plasticity.</title>
        <authorList>
            <person name="Cazalet C."/>
            <person name="Rusniok C."/>
            <person name="Brueggemann H."/>
            <person name="Zidane N."/>
            <person name="Magnier A."/>
            <person name="Ma L."/>
            <person name="Tichit M."/>
            <person name="Jarraud S."/>
            <person name="Bouchier C."/>
            <person name="Vandenesch F."/>
            <person name="Kunst F."/>
            <person name="Etienne J."/>
            <person name="Glaser P."/>
            <person name="Buchrieser C."/>
        </authorList>
    </citation>
    <scope>NUCLEOTIDE SEQUENCE [LARGE SCALE GENOMIC DNA]</scope>
    <source>
        <strain>Paris</strain>
    </source>
</reference>
<evidence type="ECO:0000255" key="1">
    <source>
        <dbReference type="HAMAP-Rule" id="MF_00098"/>
    </source>
</evidence>
<proteinExistence type="inferred from homology"/>
<organism>
    <name type="scientific">Legionella pneumophila (strain Paris)</name>
    <dbReference type="NCBI Taxonomy" id="297246"/>
    <lineage>
        <taxon>Bacteria</taxon>
        <taxon>Pseudomonadati</taxon>
        <taxon>Pseudomonadota</taxon>
        <taxon>Gammaproteobacteria</taxon>
        <taxon>Legionellales</taxon>
        <taxon>Legionellaceae</taxon>
        <taxon>Legionella</taxon>
    </lineage>
</organism>
<dbReference type="EC" id="6.1.1.10" evidence="1"/>
<dbReference type="EMBL" id="CR628336">
    <property type="protein sequence ID" value="CAH14094.1"/>
    <property type="molecule type" value="Genomic_DNA"/>
</dbReference>
<dbReference type="RefSeq" id="WP_015961878.1">
    <property type="nucleotide sequence ID" value="NC_006368.1"/>
</dbReference>
<dbReference type="SMR" id="Q5X105"/>
<dbReference type="KEGG" id="lpp:lpp2941"/>
<dbReference type="LegioList" id="lpp2941"/>
<dbReference type="HOGENOM" id="CLU_009710_7_0_6"/>
<dbReference type="GO" id="GO:0005829">
    <property type="term" value="C:cytosol"/>
    <property type="evidence" value="ECO:0007669"/>
    <property type="project" value="TreeGrafter"/>
</dbReference>
<dbReference type="GO" id="GO:0005524">
    <property type="term" value="F:ATP binding"/>
    <property type="evidence" value="ECO:0007669"/>
    <property type="project" value="UniProtKB-UniRule"/>
</dbReference>
<dbReference type="GO" id="GO:0046872">
    <property type="term" value="F:metal ion binding"/>
    <property type="evidence" value="ECO:0007669"/>
    <property type="project" value="UniProtKB-KW"/>
</dbReference>
<dbReference type="GO" id="GO:0004825">
    <property type="term" value="F:methionine-tRNA ligase activity"/>
    <property type="evidence" value="ECO:0007669"/>
    <property type="project" value="UniProtKB-UniRule"/>
</dbReference>
<dbReference type="GO" id="GO:0000049">
    <property type="term" value="F:tRNA binding"/>
    <property type="evidence" value="ECO:0007669"/>
    <property type="project" value="UniProtKB-KW"/>
</dbReference>
<dbReference type="GO" id="GO:0006431">
    <property type="term" value="P:methionyl-tRNA aminoacylation"/>
    <property type="evidence" value="ECO:0007669"/>
    <property type="project" value="UniProtKB-UniRule"/>
</dbReference>
<dbReference type="CDD" id="cd07957">
    <property type="entry name" value="Anticodon_Ia_Met"/>
    <property type="match status" value="1"/>
</dbReference>
<dbReference type="CDD" id="cd00814">
    <property type="entry name" value="MetRS_core"/>
    <property type="match status" value="1"/>
</dbReference>
<dbReference type="CDD" id="cd02800">
    <property type="entry name" value="tRNA_bind_EcMetRS_like"/>
    <property type="match status" value="1"/>
</dbReference>
<dbReference type="FunFam" id="1.10.730.10:FF:000005">
    <property type="entry name" value="Methionine--tRNA ligase"/>
    <property type="match status" value="1"/>
</dbReference>
<dbReference type="FunFam" id="2.20.28.20:FF:000001">
    <property type="entry name" value="Methionine--tRNA ligase"/>
    <property type="match status" value="1"/>
</dbReference>
<dbReference type="FunFam" id="2.40.50.140:FF:000042">
    <property type="entry name" value="Methionine--tRNA ligase"/>
    <property type="match status" value="1"/>
</dbReference>
<dbReference type="Gene3D" id="3.40.50.620">
    <property type="entry name" value="HUPs"/>
    <property type="match status" value="1"/>
</dbReference>
<dbReference type="Gene3D" id="1.10.730.10">
    <property type="entry name" value="Isoleucyl-tRNA Synthetase, Domain 1"/>
    <property type="match status" value="1"/>
</dbReference>
<dbReference type="Gene3D" id="2.20.28.20">
    <property type="entry name" value="Methionyl-tRNA synthetase, Zn-domain"/>
    <property type="match status" value="1"/>
</dbReference>
<dbReference type="Gene3D" id="2.40.50.140">
    <property type="entry name" value="Nucleic acid-binding proteins"/>
    <property type="match status" value="1"/>
</dbReference>
<dbReference type="HAMAP" id="MF_00098">
    <property type="entry name" value="Met_tRNA_synth_type1"/>
    <property type="match status" value="1"/>
</dbReference>
<dbReference type="InterPro" id="IPR001412">
    <property type="entry name" value="aa-tRNA-synth_I_CS"/>
</dbReference>
<dbReference type="InterPro" id="IPR041872">
    <property type="entry name" value="Anticodon_Met"/>
</dbReference>
<dbReference type="InterPro" id="IPR004495">
    <property type="entry name" value="Met-tRNA-synth_bsu_C"/>
</dbReference>
<dbReference type="InterPro" id="IPR023458">
    <property type="entry name" value="Met-tRNA_ligase_1"/>
</dbReference>
<dbReference type="InterPro" id="IPR014758">
    <property type="entry name" value="Met-tRNA_synth"/>
</dbReference>
<dbReference type="InterPro" id="IPR015413">
    <property type="entry name" value="Methionyl/Leucyl_tRNA_Synth"/>
</dbReference>
<dbReference type="InterPro" id="IPR033911">
    <property type="entry name" value="MetRS_core"/>
</dbReference>
<dbReference type="InterPro" id="IPR029038">
    <property type="entry name" value="MetRS_Zn"/>
</dbReference>
<dbReference type="InterPro" id="IPR012340">
    <property type="entry name" value="NA-bd_OB-fold"/>
</dbReference>
<dbReference type="InterPro" id="IPR014729">
    <property type="entry name" value="Rossmann-like_a/b/a_fold"/>
</dbReference>
<dbReference type="InterPro" id="IPR002547">
    <property type="entry name" value="tRNA-bd_dom"/>
</dbReference>
<dbReference type="InterPro" id="IPR009080">
    <property type="entry name" value="tRNAsynth_Ia_anticodon-bd"/>
</dbReference>
<dbReference type="NCBIfam" id="TIGR00398">
    <property type="entry name" value="metG"/>
    <property type="match status" value="1"/>
</dbReference>
<dbReference type="NCBIfam" id="TIGR00399">
    <property type="entry name" value="metG_C_term"/>
    <property type="match status" value="1"/>
</dbReference>
<dbReference type="NCBIfam" id="NF001100">
    <property type="entry name" value="PRK00133.1"/>
    <property type="match status" value="1"/>
</dbReference>
<dbReference type="PANTHER" id="PTHR45765">
    <property type="entry name" value="METHIONINE--TRNA LIGASE"/>
    <property type="match status" value="1"/>
</dbReference>
<dbReference type="PANTHER" id="PTHR45765:SF1">
    <property type="entry name" value="METHIONINE--TRNA LIGASE, CYTOPLASMIC"/>
    <property type="match status" value="1"/>
</dbReference>
<dbReference type="Pfam" id="PF19303">
    <property type="entry name" value="Anticodon_3"/>
    <property type="match status" value="1"/>
</dbReference>
<dbReference type="Pfam" id="PF09334">
    <property type="entry name" value="tRNA-synt_1g"/>
    <property type="match status" value="1"/>
</dbReference>
<dbReference type="Pfam" id="PF01588">
    <property type="entry name" value="tRNA_bind"/>
    <property type="match status" value="1"/>
</dbReference>
<dbReference type="PRINTS" id="PR01041">
    <property type="entry name" value="TRNASYNTHMET"/>
</dbReference>
<dbReference type="SUPFAM" id="SSF47323">
    <property type="entry name" value="Anticodon-binding domain of a subclass of class I aminoacyl-tRNA synthetases"/>
    <property type="match status" value="1"/>
</dbReference>
<dbReference type="SUPFAM" id="SSF57770">
    <property type="entry name" value="Methionyl-tRNA synthetase (MetRS), Zn-domain"/>
    <property type="match status" value="1"/>
</dbReference>
<dbReference type="SUPFAM" id="SSF50249">
    <property type="entry name" value="Nucleic acid-binding proteins"/>
    <property type="match status" value="1"/>
</dbReference>
<dbReference type="SUPFAM" id="SSF52374">
    <property type="entry name" value="Nucleotidylyl transferase"/>
    <property type="match status" value="1"/>
</dbReference>
<dbReference type="PROSITE" id="PS00178">
    <property type="entry name" value="AA_TRNA_LIGASE_I"/>
    <property type="match status" value="1"/>
</dbReference>
<dbReference type="PROSITE" id="PS50886">
    <property type="entry name" value="TRBD"/>
    <property type="match status" value="1"/>
</dbReference>